<gene>
    <name evidence="1" type="primary">pyrD</name>
    <name type="ordered locus">SNSL254_A1099</name>
</gene>
<dbReference type="EC" id="1.3.5.2" evidence="1"/>
<dbReference type="EMBL" id="CP001113">
    <property type="protein sequence ID" value="ACF61168.1"/>
    <property type="molecule type" value="Genomic_DNA"/>
</dbReference>
<dbReference type="RefSeq" id="WP_000291723.1">
    <property type="nucleotide sequence ID" value="NZ_CCMR01000003.1"/>
</dbReference>
<dbReference type="SMR" id="B4T1Y8"/>
<dbReference type="KEGG" id="see:SNSL254_A1099"/>
<dbReference type="HOGENOM" id="CLU_013640_2_0_6"/>
<dbReference type="UniPathway" id="UPA00070">
    <property type="reaction ID" value="UER00946"/>
</dbReference>
<dbReference type="Proteomes" id="UP000008824">
    <property type="component" value="Chromosome"/>
</dbReference>
<dbReference type="GO" id="GO:0005737">
    <property type="term" value="C:cytoplasm"/>
    <property type="evidence" value="ECO:0007669"/>
    <property type="project" value="InterPro"/>
</dbReference>
<dbReference type="GO" id="GO:0005886">
    <property type="term" value="C:plasma membrane"/>
    <property type="evidence" value="ECO:0007669"/>
    <property type="project" value="UniProtKB-SubCell"/>
</dbReference>
<dbReference type="GO" id="GO:0106430">
    <property type="term" value="F:dihydroorotate dehydrogenase (quinone) activity"/>
    <property type="evidence" value="ECO:0007669"/>
    <property type="project" value="UniProtKB-EC"/>
</dbReference>
<dbReference type="GO" id="GO:0006207">
    <property type="term" value="P:'de novo' pyrimidine nucleobase biosynthetic process"/>
    <property type="evidence" value="ECO:0007669"/>
    <property type="project" value="InterPro"/>
</dbReference>
<dbReference type="GO" id="GO:0044205">
    <property type="term" value="P:'de novo' UMP biosynthetic process"/>
    <property type="evidence" value="ECO:0007669"/>
    <property type="project" value="UniProtKB-UniRule"/>
</dbReference>
<dbReference type="CDD" id="cd04738">
    <property type="entry name" value="DHOD_2_like"/>
    <property type="match status" value="1"/>
</dbReference>
<dbReference type="FunFam" id="3.20.20.70:FF:000028">
    <property type="entry name" value="Dihydroorotate dehydrogenase (quinone)"/>
    <property type="match status" value="1"/>
</dbReference>
<dbReference type="Gene3D" id="3.20.20.70">
    <property type="entry name" value="Aldolase class I"/>
    <property type="match status" value="1"/>
</dbReference>
<dbReference type="HAMAP" id="MF_00225">
    <property type="entry name" value="DHO_dh_type2"/>
    <property type="match status" value="1"/>
</dbReference>
<dbReference type="InterPro" id="IPR013785">
    <property type="entry name" value="Aldolase_TIM"/>
</dbReference>
<dbReference type="InterPro" id="IPR050074">
    <property type="entry name" value="DHO_dehydrogenase"/>
</dbReference>
<dbReference type="InterPro" id="IPR012135">
    <property type="entry name" value="Dihydroorotate_DH_1_2"/>
</dbReference>
<dbReference type="InterPro" id="IPR005719">
    <property type="entry name" value="Dihydroorotate_DH_2"/>
</dbReference>
<dbReference type="InterPro" id="IPR005720">
    <property type="entry name" value="Dihydroorotate_DH_cat"/>
</dbReference>
<dbReference type="InterPro" id="IPR001295">
    <property type="entry name" value="Dihydroorotate_DH_CS"/>
</dbReference>
<dbReference type="NCBIfam" id="NF003644">
    <property type="entry name" value="PRK05286.1-1"/>
    <property type="match status" value="1"/>
</dbReference>
<dbReference type="NCBIfam" id="NF003645">
    <property type="entry name" value="PRK05286.1-2"/>
    <property type="match status" value="1"/>
</dbReference>
<dbReference type="NCBIfam" id="NF003646">
    <property type="entry name" value="PRK05286.1-4"/>
    <property type="match status" value="1"/>
</dbReference>
<dbReference type="NCBIfam" id="NF003652">
    <property type="entry name" value="PRK05286.2-5"/>
    <property type="match status" value="1"/>
</dbReference>
<dbReference type="NCBIfam" id="TIGR01036">
    <property type="entry name" value="pyrD_sub2"/>
    <property type="match status" value="1"/>
</dbReference>
<dbReference type="PANTHER" id="PTHR48109:SF4">
    <property type="entry name" value="DIHYDROOROTATE DEHYDROGENASE (QUINONE), MITOCHONDRIAL"/>
    <property type="match status" value="1"/>
</dbReference>
<dbReference type="PANTHER" id="PTHR48109">
    <property type="entry name" value="DIHYDROOROTATE DEHYDROGENASE (QUINONE), MITOCHONDRIAL-RELATED"/>
    <property type="match status" value="1"/>
</dbReference>
<dbReference type="Pfam" id="PF01180">
    <property type="entry name" value="DHO_dh"/>
    <property type="match status" value="1"/>
</dbReference>
<dbReference type="PIRSF" id="PIRSF000164">
    <property type="entry name" value="DHO_oxidase"/>
    <property type="match status" value="1"/>
</dbReference>
<dbReference type="SUPFAM" id="SSF51395">
    <property type="entry name" value="FMN-linked oxidoreductases"/>
    <property type="match status" value="1"/>
</dbReference>
<dbReference type="PROSITE" id="PS00911">
    <property type="entry name" value="DHODEHASE_1"/>
    <property type="match status" value="1"/>
</dbReference>
<dbReference type="PROSITE" id="PS00912">
    <property type="entry name" value="DHODEHASE_2"/>
    <property type="match status" value="1"/>
</dbReference>
<evidence type="ECO:0000255" key="1">
    <source>
        <dbReference type="HAMAP-Rule" id="MF_00225"/>
    </source>
</evidence>
<name>PYRD_SALNS</name>
<comment type="function">
    <text evidence="1">Catalyzes the conversion of dihydroorotate to orotate with quinone as electron acceptor.</text>
</comment>
<comment type="catalytic activity">
    <reaction evidence="1">
        <text>(S)-dihydroorotate + a quinone = orotate + a quinol</text>
        <dbReference type="Rhea" id="RHEA:30187"/>
        <dbReference type="ChEBI" id="CHEBI:24646"/>
        <dbReference type="ChEBI" id="CHEBI:30839"/>
        <dbReference type="ChEBI" id="CHEBI:30864"/>
        <dbReference type="ChEBI" id="CHEBI:132124"/>
        <dbReference type="EC" id="1.3.5.2"/>
    </reaction>
</comment>
<comment type="cofactor">
    <cofactor evidence="1">
        <name>FMN</name>
        <dbReference type="ChEBI" id="CHEBI:58210"/>
    </cofactor>
    <text evidence="1">Binds 1 FMN per subunit.</text>
</comment>
<comment type="pathway">
    <text evidence="1">Pyrimidine metabolism; UMP biosynthesis via de novo pathway; orotate from (S)-dihydroorotate (quinone route): step 1/1.</text>
</comment>
<comment type="subunit">
    <text evidence="1">Monomer.</text>
</comment>
<comment type="subcellular location">
    <subcellularLocation>
        <location evidence="1">Cell membrane</location>
        <topology evidence="1">Peripheral membrane protein</topology>
    </subcellularLocation>
</comment>
<comment type="similarity">
    <text evidence="1">Belongs to the dihydroorotate dehydrogenase family. Type 2 subfamily.</text>
</comment>
<organism>
    <name type="scientific">Salmonella newport (strain SL254)</name>
    <dbReference type="NCBI Taxonomy" id="423368"/>
    <lineage>
        <taxon>Bacteria</taxon>
        <taxon>Pseudomonadati</taxon>
        <taxon>Pseudomonadota</taxon>
        <taxon>Gammaproteobacteria</taxon>
        <taxon>Enterobacterales</taxon>
        <taxon>Enterobacteriaceae</taxon>
        <taxon>Salmonella</taxon>
    </lineage>
</organism>
<accession>B4T1Y8</accession>
<feature type="chain" id="PRO_1000100286" description="Dihydroorotate dehydrogenase (quinone)">
    <location>
        <begin position="1"/>
        <end position="336"/>
    </location>
</feature>
<feature type="active site" description="Nucleophile" evidence="1">
    <location>
        <position position="175"/>
    </location>
</feature>
<feature type="binding site" evidence="1">
    <location>
        <begin position="62"/>
        <end position="66"/>
    </location>
    <ligand>
        <name>FMN</name>
        <dbReference type="ChEBI" id="CHEBI:58210"/>
    </ligand>
</feature>
<feature type="binding site" evidence="1">
    <location>
        <position position="66"/>
    </location>
    <ligand>
        <name>substrate</name>
    </ligand>
</feature>
<feature type="binding site" evidence="1">
    <location>
        <position position="86"/>
    </location>
    <ligand>
        <name>FMN</name>
        <dbReference type="ChEBI" id="CHEBI:58210"/>
    </ligand>
</feature>
<feature type="binding site" evidence="1">
    <location>
        <begin position="111"/>
        <end position="115"/>
    </location>
    <ligand>
        <name>substrate</name>
    </ligand>
</feature>
<feature type="binding site" evidence="1">
    <location>
        <position position="139"/>
    </location>
    <ligand>
        <name>FMN</name>
        <dbReference type="ChEBI" id="CHEBI:58210"/>
    </ligand>
</feature>
<feature type="binding site" evidence="1">
    <location>
        <position position="172"/>
    </location>
    <ligand>
        <name>FMN</name>
        <dbReference type="ChEBI" id="CHEBI:58210"/>
    </ligand>
</feature>
<feature type="binding site" evidence="1">
    <location>
        <position position="172"/>
    </location>
    <ligand>
        <name>substrate</name>
    </ligand>
</feature>
<feature type="binding site" evidence="1">
    <location>
        <position position="177"/>
    </location>
    <ligand>
        <name>substrate</name>
    </ligand>
</feature>
<feature type="binding site" evidence="1">
    <location>
        <position position="217"/>
    </location>
    <ligand>
        <name>FMN</name>
        <dbReference type="ChEBI" id="CHEBI:58210"/>
    </ligand>
</feature>
<feature type="binding site" evidence="1">
    <location>
        <position position="245"/>
    </location>
    <ligand>
        <name>FMN</name>
        <dbReference type="ChEBI" id="CHEBI:58210"/>
    </ligand>
</feature>
<feature type="binding site" evidence="1">
    <location>
        <begin position="246"/>
        <end position="247"/>
    </location>
    <ligand>
        <name>substrate</name>
    </ligand>
</feature>
<feature type="binding site" evidence="1">
    <location>
        <position position="268"/>
    </location>
    <ligand>
        <name>FMN</name>
        <dbReference type="ChEBI" id="CHEBI:58210"/>
    </ligand>
</feature>
<feature type="binding site" evidence="1">
    <location>
        <position position="297"/>
    </location>
    <ligand>
        <name>FMN</name>
        <dbReference type="ChEBI" id="CHEBI:58210"/>
    </ligand>
</feature>
<feature type="binding site" evidence="1">
    <location>
        <begin position="318"/>
        <end position="319"/>
    </location>
    <ligand>
        <name>FMN</name>
        <dbReference type="ChEBI" id="CHEBI:58210"/>
    </ligand>
</feature>
<protein>
    <recommendedName>
        <fullName evidence="1">Dihydroorotate dehydrogenase (quinone)</fullName>
        <ecNumber evidence="1">1.3.5.2</ecNumber>
    </recommendedName>
    <alternativeName>
        <fullName evidence="1">DHOdehase</fullName>
        <shortName evidence="1">DHOD</shortName>
        <shortName evidence="1">DHODase</shortName>
    </alternativeName>
    <alternativeName>
        <fullName evidence="1">Dihydroorotate oxidase</fullName>
    </alternativeName>
</protein>
<sequence length="336" mass="36740">MYYPFVRKALFQLDPERAHEFTFQQLRRITGTPLEALVRQKVPTKPVTCMGLTFKNPLGLAAGLDKDGECIDALGAMGFGSLEIGTVTPRPQPGNDKPRLFRLVDAEGLINRMGFNNLGVDNLVENVKKAHFDGILGINIGKNKDTPVENGKDDYLICMEKVYAYAGYIAINISSPNTPGLRTLQYGDALDDLLTAIKNKQNDLQAIHHKYVPVAVKIAPDLCEEELIQVADSLLRHNIDGVIATNTTLDRSLVQGMKNCQQTGGLSGRPLQLKSTEIIRRLSQELKGQLPIIGVGGIDSVIAAREKIAAGATLVQIYSGFIFKGPPLIKEIVTHI</sequence>
<keyword id="KW-1003">Cell membrane</keyword>
<keyword id="KW-0285">Flavoprotein</keyword>
<keyword id="KW-0288">FMN</keyword>
<keyword id="KW-0472">Membrane</keyword>
<keyword id="KW-0560">Oxidoreductase</keyword>
<keyword id="KW-0665">Pyrimidine biosynthesis</keyword>
<proteinExistence type="inferred from homology"/>
<reference key="1">
    <citation type="journal article" date="2011" name="J. Bacteriol.">
        <title>Comparative genomics of 28 Salmonella enterica isolates: evidence for CRISPR-mediated adaptive sublineage evolution.</title>
        <authorList>
            <person name="Fricke W.F."/>
            <person name="Mammel M.K."/>
            <person name="McDermott P.F."/>
            <person name="Tartera C."/>
            <person name="White D.G."/>
            <person name="Leclerc J.E."/>
            <person name="Ravel J."/>
            <person name="Cebula T.A."/>
        </authorList>
    </citation>
    <scope>NUCLEOTIDE SEQUENCE [LARGE SCALE GENOMIC DNA]</scope>
    <source>
        <strain>SL254</strain>
    </source>
</reference>